<accession>Q1J995</accession>
<gene>
    <name evidence="1" type="primary">rpsD</name>
    <name type="ordered locus">MGAS2096_Spy1864</name>
</gene>
<organism>
    <name type="scientific">Streptococcus pyogenes serotype M12 (strain MGAS2096)</name>
    <dbReference type="NCBI Taxonomy" id="370553"/>
    <lineage>
        <taxon>Bacteria</taxon>
        <taxon>Bacillati</taxon>
        <taxon>Bacillota</taxon>
        <taxon>Bacilli</taxon>
        <taxon>Lactobacillales</taxon>
        <taxon>Streptococcaceae</taxon>
        <taxon>Streptococcus</taxon>
    </lineage>
</organism>
<feature type="chain" id="PRO_0000293378" description="Small ribosomal subunit protein uS4">
    <location>
        <begin position="1"/>
        <end position="203"/>
    </location>
</feature>
<feature type="domain" description="S4 RNA-binding" evidence="1">
    <location>
        <begin position="93"/>
        <end position="156"/>
    </location>
</feature>
<comment type="function">
    <text evidence="1">One of the primary rRNA binding proteins, it binds directly to 16S rRNA where it nucleates assembly of the body of the 30S subunit.</text>
</comment>
<comment type="function">
    <text evidence="1">With S5 and S12 plays an important role in translational accuracy.</text>
</comment>
<comment type="subunit">
    <text evidence="1">Part of the 30S ribosomal subunit. Contacts protein S5. The interaction surface between S4 and S5 is involved in control of translational fidelity.</text>
</comment>
<comment type="similarity">
    <text evidence="1">Belongs to the universal ribosomal protein uS4 family.</text>
</comment>
<keyword id="KW-0687">Ribonucleoprotein</keyword>
<keyword id="KW-0689">Ribosomal protein</keyword>
<keyword id="KW-0694">RNA-binding</keyword>
<keyword id="KW-0699">rRNA-binding</keyword>
<evidence type="ECO:0000255" key="1">
    <source>
        <dbReference type="HAMAP-Rule" id="MF_01306"/>
    </source>
</evidence>
<evidence type="ECO:0000305" key="2"/>
<reference key="1">
    <citation type="journal article" date="2006" name="Proc. Natl. Acad. Sci. U.S.A.">
        <title>Molecular genetic anatomy of inter- and intraserotype variation in the human bacterial pathogen group A Streptococcus.</title>
        <authorList>
            <person name="Beres S.B."/>
            <person name="Richter E.W."/>
            <person name="Nagiec M.J."/>
            <person name="Sumby P."/>
            <person name="Porcella S.F."/>
            <person name="DeLeo F.R."/>
            <person name="Musser J.M."/>
        </authorList>
    </citation>
    <scope>NUCLEOTIDE SEQUENCE [LARGE SCALE GENOMIC DNA]</scope>
    <source>
        <strain>MGAS2096</strain>
    </source>
</reference>
<name>RS4_STRPB</name>
<proteinExistence type="inferred from homology"/>
<protein>
    <recommendedName>
        <fullName evidence="1">Small ribosomal subunit protein uS4</fullName>
    </recommendedName>
    <alternativeName>
        <fullName evidence="2">30S ribosomal protein S4</fullName>
    </alternativeName>
</protein>
<sequence>MSRYTGPSWKQSRRLGLSLTGTGKELARRNYVPGQHGPNNRSKLSEYGLQLAEKQKLRFSYGLGEKQFRNLFVQATKIKEGTLGFNFMVLLERRLDNVVYRLGLATTRRQARQFVNHGHILVDGKRVDIPSYRVDPGQVISVREKSMKVPAILEAVEATLGRPAFVSFDAEKLEGSLTRLPERDEINPEINEALVVEFYNKML</sequence>
<dbReference type="EMBL" id="CP000261">
    <property type="protein sequence ID" value="ABF36916.1"/>
    <property type="molecule type" value="Genomic_DNA"/>
</dbReference>
<dbReference type="SMR" id="Q1J995"/>
<dbReference type="KEGG" id="spj:MGAS2096_Spy1864"/>
<dbReference type="HOGENOM" id="CLU_092403_0_1_9"/>
<dbReference type="GO" id="GO:0015935">
    <property type="term" value="C:small ribosomal subunit"/>
    <property type="evidence" value="ECO:0007669"/>
    <property type="project" value="InterPro"/>
</dbReference>
<dbReference type="GO" id="GO:0019843">
    <property type="term" value="F:rRNA binding"/>
    <property type="evidence" value="ECO:0007669"/>
    <property type="project" value="UniProtKB-UniRule"/>
</dbReference>
<dbReference type="GO" id="GO:0003735">
    <property type="term" value="F:structural constituent of ribosome"/>
    <property type="evidence" value="ECO:0007669"/>
    <property type="project" value="InterPro"/>
</dbReference>
<dbReference type="GO" id="GO:0042274">
    <property type="term" value="P:ribosomal small subunit biogenesis"/>
    <property type="evidence" value="ECO:0007669"/>
    <property type="project" value="TreeGrafter"/>
</dbReference>
<dbReference type="GO" id="GO:0006412">
    <property type="term" value="P:translation"/>
    <property type="evidence" value="ECO:0007669"/>
    <property type="project" value="UniProtKB-UniRule"/>
</dbReference>
<dbReference type="CDD" id="cd00165">
    <property type="entry name" value="S4"/>
    <property type="match status" value="1"/>
</dbReference>
<dbReference type="FunFam" id="1.10.1050.10:FF:000001">
    <property type="entry name" value="30S ribosomal protein S4"/>
    <property type="match status" value="1"/>
</dbReference>
<dbReference type="FunFam" id="3.10.290.10:FF:000001">
    <property type="entry name" value="30S ribosomal protein S4"/>
    <property type="match status" value="1"/>
</dbReference>
<dbReference type="Gene3D" id="1.10.1050.10">
    <property type="entry name" value="Ribosomal Protein S4 Delta 41, Chain A, domain 1"/>
    <property type="match status" value="1"/>
</dbReference>
<dbReference type="Gene3D" id="3.10.290.10">
    <property type="entry name" value="RNA-binding S4 domain"/>
    <property type="match status" value="1"/>
</dbReference>
<dbReference type="HAMAP" id="MF_01306_B">
    <property type="entry name" value="Ribosomal_uS4_B"/>
    <property type="match status" value="1"/>
</dbReference>
<dbReference type="InterPro" id="IPR022801">
    <property type="entry name" value="Ribosomal_uS4"/>
</dbReference>
<dbReference type="InterPro" id="IPR005709">
    <property type="entry name" value="Ribosomal_uS4_bac-type"/>
</dbReference>
<dbReference type="InterPro" id="IPR018079">
    <property type="entry name" value="Ribosomal_uS4_CS"/>
</dbReference>
<dbReference type="InterPro" id="IPR001912">
    <property type="entry name" value="Ribosomal_uS4_N"/>
</dbReference>
<dbReference type="InterPro" id="IPR002942">
    <property type="entry name" value="S4_RNA-bd"/>
</dbReference>
<dbReference type="InterPro" id="IPR036986">
    <property type="entry name" value="S4_RNA-bd_sf"/>
</dbReference>
<dbReference type="NCBIfam" id="NF003717">
    <property type="entry name" value="PRK05327.1"/>
    <property type="match status" value="1"/>
</dbReference>
<dbReference type="NCBIfam" id="TIGR01017">
    <property type="entry name" value="rpsD_bact"/>
    <property type="match status" value="1"/>
</dbReference>
<dbReference type="PANTHER" id="PTHR11831">
    <property type="entry name" value="30S 40S RIBOSOMAL PROTEIN"/>
    <property type="match status" value="1"/>
</dbReference>
<dbReference type="PANTHER" id="PTHR11831:SF4">
    <property type="entry name" value="SMALL RIBOSOMAL SUBUNIT PROTEIN US4M"/>
    <property type="match status" value="1"/>
</dbReference>
<dbReference type="Pfam" id="PF00163">
    <property type="entry name" value="Ribosomal_S4"/>
    <property type="match status" value="1"/>
</dbReference>
<dbReference type="Pfam" id="PF01479">
    <property type="entry name" value="S4"/>
    <property type="match status" value="1"/>
</dbReference>
<dbReference type="SMART" id="SM01390">
    <property type="entry name" value="Ribosomal_S4"/>
    <property type="match status" value="1"/>
</dbReference>
<dbReference type="SMART" id="SM00363">
    <property type="entry name" value="S4"/>
    <property type="match status" value="1"/>
</dbReference>
<dbReference type="SUPFAM" id="SSF55174">
    <property type="entry name" value="Alpha-L RNA-binding motif"/>
    <property type="match status" value="1"/>
</dbReference>
<dbReference type="PROSITE" id="PS00632">
    <property type="entry name" value="RIBOSOMAL_S4"/>
    <property type="match status" value="1"/>
</dbReference>
<dbReference type="PROSITE" id="PS50889">
    <property type="entry name" value="S4"/>
    <property type="match status" value="1"/>
</dbReference>